<reference key="1">
    <citation type="submission" date="2006-08" db="EMBL/GenBank/DDBJ databases">
        <title>Complete sequence of Maricaulis maris MCS10.</title>
        <authorList>
            <consortium name="US DOE Joint Genome Institute"/>
            <person name="Copeland A."/>
            <person name="Lucas S."/>
            <person name="Lapidus A."/>
            <person name="Barry K."/>
            <person name="Detter J.C."/>
            <person name="Glavina del Rio T."/>
            <person name="Hammon N."/>
            <person name="Israni S."/>
            <person name="Dalin E."/>
            <person name="Tice H."/>
            <person name="Pitluck S."/>
            <person name="Saunders E."/>
            <person name="Brettin T."/>
            <person name="Bruce D."/>
            <person name="Han C."/>
            <person name="Tapia R."/>
            <person name="Gilna P."/>
            <person name="Schmutz J."/>
            <person name="Larimer F."/>
            <person name="Land M."/>
            <person name="Hauser L."/>
            <person name="Kyrpides N."/>
            <person name="Mikhailova N."/>
            <person name="Viollier P."/>
            <person name="Stephens C."/>
            <person name="Richardson P."/>
        </authorList>
    </citation>
    <scope>NUCLEOTIDE SEQUENCE [LARGE SCALE GENOMIC DNA]</scope>
    <source>
        <strain>MCS10</strain>
    </source>
</reference>
<gene>
    <name evidence="1" type="primary">rimP</name>
    <name type="ordered locus">Mmar10_3040</name>
</gene>
<evidence type="ECO:0000255" key="1">
    <source>
        <dbReference type="HAMAP-Rule" id="MF_01077"/>
    </source>
</evidence>
<feature type="chain" id="PRO_0000384699" description="Ribosome maturation factor RimP">
    <location>
        <begin position="1"/>
        <end position="178"/>
    </location>
</feature>
<keyword id="KW-0963">Cytoplasm</keyword>
<keyword id="KW-1185">Reference proteome</keyword>
<keyword id="KW-0690">Ribosome biogenesis</keyword>
<comment type="function">
    <text evidence="1">Required for maturation of 30S ribosomal subunits.</text>
</comment>
<comment type="subcellular location">
    <subcellularLocation>
        <location evidence="1">Cytoplasm</location>
    </subcellularLocation>
</comment>
<comment type="similarity">
    <text evidence="1">Belongs to the RimP family.</text>
</comment>
<dbReference type="EMBL" id="CP000449">
    <property type="protein sequence ID" value="ABI67321.1"/>
    <property type="molecule type" value="Genomic_DNA"/>
</dbReference>
<dbReference type="RefSeq" id="WP_011644965.1">
    <property type="nucleotide sequence ID" value="NC_008347.1"/>
</dbReference>
<dbReference type="SMR" id="Q0AK72"/>
<dbReference type="STRING" id="394221.Mmar10_3040"/>
<dbReference type="KEGG" id="mmr:Mmar10_3040"/>
<dbReference type="eggNOG" id="COG0779">
    <property type="taxonomic scope" value="Bacteria"/>
</dbReference>
<dbReference type="HOGENOM" id="CLU_070525_0_1_5"/>
<dbReference type="OrthoDB" id="9805006at2"/>
<dbReference type="Proteomes" id="UP000001964">
    <property type="component" value="Chromosome"/>
</dbReference>
<dbReference type="GO" id="GO:0005829">
    <property type="term" value="C:cytosol"/>
    <property type="evidence" value="ECO:0007669"/>
    <property type="project" value="TreeGrafter"/>
</dbReference>
<dbReference type="GO" id="GO:0000028">
    <property type="term" value="P:ribosomal small subunit assembly"/>
    <property type="evidence" value="ECO:0007669"/>
    <property type="project" value="TreeGrafter"/>
</dbReference>
<dbReference type="GO" id="GO:0006412">
    <property type="term" value="P:translation"/>
    <property type="evidence" value="ECO:0007669"/>
    <property type="project" value="TreeGrafter"/>
</dbReference>
<dbReference type="CDD" id="cd01734">
    <property type="entry name" value="YlxS_C"/>
    <property type="match status" value="1"/>
</dbReference>
<dbReference type="Gene3D" id="2.30.30.180">
    <property type="entry name" value="Ribosome maturation factor RimP, C-terminal domain"/>
    <property type="match status" value="1"/>
</dbReference>
<dbReference type="Gene3D" id="3.30.300.70">
    <property type="entry name" value="RimP-like superfamily, N-terminal"/>
    <property type="match status" value="1"/>
</dbReference>
<dbReference type="HAMAP" id="MF_01077">
    <property type="entry name" value="RimP"/>
    <property type="match status" value="1"/>
</dbReference>
<dbReference type="InterPro" id="IPR003728">
    <property type="entry name" value="Ribosome_maturation_RimP"/>
</dbReference>
<dbReference type="InterPro" id="IPR028998">
    <property type="entry name" value="RimP_C"/>
</dbReference>
<dbReference type="InterPro" id="IPR036847">
    <property type="entry name" value="RimP_C_sf"/>
</dbReference>
<dbReference type="InterPro" id="IPR028989">
    <property type="entry name" value="RimP_N"/>
</dbReference>
<dbReference type="InterPro" id="IPR035956">
    <property type="entry name" value="RimP_N_sf"/>
</dbReference>
<dbReference type="NCBIfam" id="NF000932">
    <property type="entry name" value="PRK00092.2-5"/>
    <property type="match status" value="1"/>
</dbReference>
<dbReference type="PANTHER" id="PTHR33867">
    <property type="entry name" value="RIBOSOME MATURATION FACTOR RIMP"/>
    <property type="match status" value="1"/>
</dbReference>
<dbReference type="PANTHER" id="PTHR33867:SF1">
    <property type="entry name" value="RIBOSOME MATURATION FACTOR RIMP"/>
    <property type="match status" value="1"/>
</dbReference>
<dbReference type="Pfam" id="PF17384">
    <property type="entry name" value="DUF150_C"/>
    <property type="match status" value="1"/>
</dbReference>
<dbReference type="Pfam" id="PF02576">
    <property type="entry name" value="RimP_N"/>
    <property type="match status" value="1"/>
</dbReference>
<dbReference type="SUPFAM" id="SSF74942">
    <property type="entry name" value="YhbC-like, C-terminal domain"/>
    <property type="match status" value="1"/>
</dbReference>
<dbReference type="SUPFAM" id="SSF75420">
    <property type="entry name" value="YhbC-like, N-terminal domain"/>
    <property type="match status" value="1"/>
</dbReference>
<name>RIMP_MARMM</name>
<organism>
    <name type="scientific">Maricaulis maris (strain MCS10)</name>
    <name type="common">Caulobacter maris</name>
    <dbReference type="NCBI Taxonomy" id="394221"/>
    <lineage>
        <taxon>Bacteria</taxon>
        <taxon>Pseudomonadati</taxon>
        <taxon>Pseudomonadota</taxon>
        <taxon>Alphaproteobacteria</taxon>
        <taxon>Maricaulales</taxon>
        <taxon>Maricaulaceae</taxon>
        <taxon>Maricaulis</taxon>
    </lineage>
</organism>
<proteinExistence type="inferred from homology"/>
<protein>
    <recommendedName>
        <fullName evidence="1">Ribosome maturation factor RimP</fullName>
    </recommendedName>
</protein>
<accession>Q0AK72</accession>
<sequence length="178" mass="19689">MKTKSPQDDRILALAEPVAAELALEVVRVRIMSGKRPRLQIMADRTNGTGIEVEDCARFSRALSEVFEVEDPVAGEYDLEVSSPGIDRPLTTLPHFERWEGNEVKIELDRLAEGRKRFRGILAGVEDGHVGLDMDGEDDTTMIPFDWIVEAKLVLTDALIEADLKARGRGAATTEGDE</sequence>